<keyword id="KW-0663">Pyridoxal phosphate</keyword>
<keyword id="KW-1185">Reference proteome</keyword>
<keyword id="KW-0808">Transferase</keyword>
<name>CSD_PASMU</name>
<sequence>MDYGKTLTQSLLSNGADKRENKMAFNPSVFKQHFPYLQQADAVVYLDSAATALKPQVLTDATIAFYQSAGSVHRSQYDEKQTALFEQARENVKNFIGAESEETIIWTSGTTHAINCVARGLSHQLHPKAEIIISEADHHANFVTWSEIARQYGATLHILPINEQWLIEEQDLIAVLNTNTVLVALNMVSNVTGTEQPVANLIKLIRQHSHALVLVDAAQAISHLPIDLQRLDADFIAFSAHKLYGPNGLGVLSGKRHALEQLHPLLYGGKMVERVSAQHIRFAELPYRLEAGTPNIAGVIGFNAVLEWLSQWDLTAAEQHAIALAEQCKMRLKNYPHCQLFLSPQPSSIVCFVFNGIATSDIATLLAEQNIALRAGEHCAQPYLARLGQHSTLRLSFAPYNQQADVDAFFSALDNALALLD</sequence>
<proteinExistence type="inferred from homology"/>
<comment type="function">
    <text evidence="1">Catalyzes the removal of elemental sulfur and selenium atoms from L-cysteine, L-cystine, L-selenocysteine, and L-selenocystine to produce L-alanine.</text>
</comment>
<comment type="catalytic activity">
    <reaction>
        <text>(sulfur carrier)-H + L-cysteine = (sulfur carrier)-SH + L-alanine</text>
        <dbReference type="Rhea" id="RHEA:43892"/>
        <dbReference type="Rhea" id="RHEA-COMP:14737"/>
        <dbReference type="Rhea" id="RHEA-COMP:14739"/>
        <dbReference type="ChEBI" id="CHEBI:29917"/>
        <dbReference type="ChEBI" id="CHEBI:35235"/>
        <dbReference type="ChEBI" id="CHEBI:57972"/>
        <dbReference type="ChEBI" id="CHEBI:64428"/>
        <dbReference type="EC" id="2.8.1.7"/>
    </reaction>
</comment>
<comment type="cofactor">
    <cofactor evidence="1">
        <name>pyridoxal 5'-phosphate</name>
        <dbReference type="ChEBI" id="CHEBI:597326"/>
    </cofactor>
</comment>
<comment type="similarity">
    <text evidence="2">Belongs to the class-V pyridoxal-phosphate-dependent aminotransferase family. Csd subfamily.</text>
</comment>
<reference key="1">
    <citation type="journal article" date="2001" name="Proc. Natl. Acad. Sci. U.S.A.">
        <title>Complete genomic sequence of Pasteurella multocida Pm70.</title>
        <authorList>
            <person name="May B.J."/>
            <person name="Zhang Q."/>
            <person name="Li L.L."/>
            <person name="Paustian M.L."/>
            <person name="Whittam T.S."/>
            <person name="Kapur V."/>
        </authorList>
    </citation>
    <scope>NUCLEOTIDE SEQUENCE [LARGE SCALE GENOMIC DNA]</scope>
    <source>
        <strain>Pm70</strain>
    </source>
</reference>
<dbReference type="EC" id="2.8.1.7"/>
<dbReference type="EMBL" id="AE004439">
    <property type="protein sequence ID" value="AAK02966.1"/>
    <property type="molecule type" value="Genomic_DNA"/>
</dbReference>
<dbReference type="SMR" id="P57989"/>
<dbReference type="STRING" id="272843.PM0882"/>
<dbReference type="EnsemblBacteria" id="AAK02966">
    <property type="protein sequence ID" value="AAK02966"/>
    <property type="gene ID" value="PM0882"/>
</dbReference>
<dbReference type="KEGG" id="pmu:PM0882"/>
<dbReference type="HOGENOM" id="CLU_003433_2_3_6"/>
<dbReference type="Proteomes" id="UP000000809">
    <property type="component" value="Chromosome"/>
</dbReference>
<dbReference type="GO" id="GO:0031071">
    <property type="term" value="F:cysteine desulfurase activity"/>
    <property type="evidence" value="ECO:0007669"/>
    <property type="project" value="UniProtKB-EC"/>
</dbReference>
<dbReference type="Gene3D" id="3.90.1150.10">
    <property type="entry name" value="Aspartate Aminotransferase, domain 1"/>
    <property type="match status" value="1"/>
</dbReference>
<dbReference type="Gene3D" id="3.40.640.10">
    <property type="entry name" value="Type I PLP-dependent aspartate aminotransferase-like (Major domain)"/>
    <property type="match status" value="1"/>
</dbReference>
<dbReference type="InterPro" id="IPR000192">
    <property type="entry name" value="Aminotrans_V_dom"/>
</dbReference>
<dbReference type="InterPro" id="IPR016454">
    <property type="entry name" value="Cysteine_dSase"/>
</dbReference>
<dbReference type="InterPro" id="IPR015424">
    <property type="entry name" value="PyrdxlP-dep_Trfase"/>
</dbReference>
<dbReference type="InterPro" id="IPR015421">
    <property type="entry name" value="PyrdxlP-dep_Trfase_major"/>
</dbReference>
<dbReference type="InterPro" id="IPR015422">
    <property type="entry name" value="PyrdxlP-dep_Trfase_small"/>
</dbReference>
<dbReference type="PANTHER" id="PTHR43586">
    <property type="entry name" value="CYSTEINE DESULFURASE"/>
    <property type="match status" value="1"/>
</dbReference>
<dbReference type="PANTHER" id="PTHR43586:SF8">
    <property type="entry name" value="CYSTEINE DESULFURASE 1, CHLOROPLASTIC"/>
    <property type="match status" value="1"/>
</dbReference>
<dbReference type="Pfam" id="PF00266">
    <property type="entry name" value="Aminotran_5"/>
    <property type="match status" value="1"/>
</dbReference>
<dbReference type="PIRSF" id="PIRSF005572">
    <property type="entry name" value="NifS"/>
    <property type="match status" value="1"/>
</dbReference>
<dbReference type="SUPFAM" id="SSF53383">
    <property type="entry name" value="PLP-dependent transferases"/>
    <property type="match status" value="1"/>
</dbReference>
<accession>P57989</accession>
<gene>
    <name type="primary">csd</name>
    <name type="ordered locus">PM0882</name>
</gene>
<feature type="chain" id="PRO_0000150306" description="Probable cysteine desulfurase">
    <location>
        <begin position="1"/>
        <end position="421"/>
    </location>
</feature>
<feature type="modified residue" description="N6-(pyridoxal phosphate)lysine" evidence="1">
    <location>
        <position position="242"/>
    </location>
</feature>
<protein>
    <recommendedName>
        <fullName>Probable cysteine desulfurase</fullName>
        <ecNumber>2.8.1.7</ecNumber>
    </recommendedName>
</protein>
<organism>
    <name type="scientific">Pasteurella multocida (strain Pm70)</name>
    <dbReference type="NCBI Taxonomy" id="272843"/>
    <lineage>
        <taxon>Bacteria</taxon>
        <taxon>Pseudomonadati</taxon>
        <taxon>Pseudomonadota</taxon>
        <taxon>Gammaproteobacteria</taxon>
        <taxon>Pasteurellales</taxon>
        <taxon>Pasteurellaceae</taxon>
        <taxon>Pasteurella</taxon>
    </lineage>
</organism>
<evidence type="ECO:0000250" key="1"/>
<evidence type="ECO:0000305" key="2"/>